<keyword id="KW-0010">Activator</keyword>
<keyword id="KW-0131">Cell cycle</keyword>
<keyword id="KW-0597">Phosphoprotein</keyword>
<keyword id="KW-1185">Reference proteome</keyword>
<keyword id="KW-0804">Transcription</keyword>
<keyword id="KW-0805">Transcription regulation</keyword>
<dbReference type="EMBL" id="Z70678">
    <property type="protein sequence ID" value="CAA94551.1"/>
    <property type="molecule type" value="Genomic_DNA"/>
</dbReference>
<dbReference type="EMBL" id="Z74974">
    <property type="protein sequence ID" value="CAA99259.1"/>
    <property type="molecule type" value="Genomic_DNA"/>
</dbReference>
<dbReference type="EMBL" id="AY692621">
    <property type="protein sequence ID" value="AAT92640.1"/>
    <property type="molecule type" value="Genomic_DNA"/>
</dbReference>
<dbReference type="EMBL" id="BK006948">
    <property type="protein sequence ID" value="DAA10845.1"/>
    <property type="molecule type" value="Genomic_DNA"/>
</dbReference>
<dbReference type="PIR" id="S66949">
    <property type="entry name" value="S66949"/>
</dbReference>
<dbReference type="RefSeq" id="NP_014709.1">
    <property type="nucleotide sequence ID" value="NM_001183485.1"/>
</dbReference>
<dbReference type="BioGRID" id="34465">
    <property type="interactions" value="97"/>
</dbReference>
<dbReference type="DIP" id="DIP-2714N"/>
<dbReference type="FunCoup" id="Q08471">
    <property type="interactions" value="189"/>
</dbReference>
<dbReference type="IntAct" id="Q08471">
    <property type="interactions" value="5"/>
</dbReference>
<dbReference type="MINT" id="Q08471"/>
<dbReference type="STRING" id="4932.YOR066W"/>
<dbReference type="iPTMnet" id="Q08471"/>
<dbReference type="PaxDb" id="4932-YOR066W"/>
<dbReference type="PeptideAtlas" id="Q08471"/>
<dbReference type="EnsemblFungi" id="YOR066W_mRNA">
    <property type="protein sequence ID" value="YOR066W"/>
    <property type="gene ID" value="YOR066W"/>
</dbReference>
<dbReference type="GeneID" id="854232"/>
<dbReference type="KEGG" id="sce:YOR066W"/>
<dbReference type="AGR" id="SGD:S000005592"/>
<dbReference type="SGD" id="S000005592">
    <property type="gene designation" value="MSA1"/>
</dbReference>
<dbReference type="VEuPathDB" id="FungiDB:YOR066W"/>
<dbReference type="eggNOG" id="ENOG502QUYM">
    <property type="taxonomic scope" value="Eukaryota"/>
</dbReference>
<dbReference type="HOGENOM" id="CLU_027374_0_0_1"/>
<dbReference type="InParanoid" id="Q08471"/>
<dbReference type="OMA" id="IECTPLI"/>
<dbReference type="OrthoDB" id="4065577at2759"/>
<dbReference type="BioCyc" id="YEAST:G3O-33606-MONOMER"/>
<dbReference type="BioGRID-ORCS" id="854232">
    <property type="hits" value="1 hit in 10 CRISPR screens"/>
</dbReference>
<dbReference type="PRO" id="PR:Q08471"/>
<dbReference type="Proteomes" id="UP000002311">
    <property type="component" value="Chromosome XV"/>
</dbReference>
<dbReference type="RNAct" id="Q08471">
    <property type="molecule type" value="protein"/>
</dbReference>
<dbReference type="GO" id="GO:0005737">
    <property type="term" value="C:cytoplasm"/>
    <property type="evidence" value="ECO:0000314"/>
    <property type="project" value="SGD"/>
</dbReference>
<dbReference type="GO" id="GO:0005634">
    <property type="term" value="C:nucleus"/>
    <property type="evidence" value="ECO:0000314"/>
    <property type="project" value="SGD"/>
</dbReference>
<dbReference type="GO" id="GO:0000082">
    <property type="term" value="P:G1/S transition of mitotic cell cycle"/>
    <property type="evidence" value="ECO:0000315"/>
    <property type="project" value="SGD"/>
</dbReference>
<dbReference type="GO" id="GO:0006357">
    <property type="term" value="P:regulation of transcription by RNA polymerase II"/>
    <property type="evidence" value="ECO:0000315"/>
    <property type="project" value="SGD"/>
</dbReference>
<dbReference type="GO" id="GO:0007089">
    <property type="term" value="P:traversing start control point of mitotic cell cycle"/>
    <property type="evidence" value="ECO:0000315"/>
    <property type="project" value="SGD"/>
</dbReference>
<evidence type="ECO:0000256" key="1">
    <source>
        <dbReference type="SAM" id="MobiDB-lite"/>
    </source>
</evidence>
<evidence type="ECO:0000269" key="2">
    <source>
    </source>
</evidence>
<evidence type="ECO:0000269" key="3">
    <source>
    </source>
</evidence>
<evidence type="ECO:0000269" key="4">
    <source>
    </source>
</evidence>
<evidence type="ECO:0007744" key="5">
    <source>
    </source>
</evidence>
<name>MSA1_YEAST</name>
<comment type="function">
    <text evidence="3 4">Activator of G1-specific transcription factors, MBF and SBF. Promotes both the timing of G1-specific gene transcription and cell cycle initiation. Associates with SBF- and MBF-regulated target promoters and this binding is maximal during the G1 phase, prior to maximum budding. Affects cell cycle initiation by advancing the timing of transcription of G1-specific genes. Overexpression advances the timing of SBF-dependent transcription and budding. Depletion delays both indicators of cell cycle initiation.</text>
</comment>
<comment type="subunit">
    <text evidence="4">Interacts with transcription complexes SCB-binding factor (SBF) and MCB-binding factor (MBF) at their target promoters. Interacts with MBP1 and SWI6.</text>
</comment>
<comment type="developmental stage">
    <text evidence="4">Expressed periodically during the cell cycle with peak mRNA levels occurring at the late M/early G1 phase, prior to budding, and levels decrease rapidly as cells enter into the S phase. In early G1 peak occurs (at protein level).</text>
</comment>
<comment type="PTM">
    <text evidence="2">Phosphorylated by CDC28.</text>
</comment>
<sequence>MDKSMIKKRGRPPITKDYPNPLQSPMAHSSMQVQKQGPHSFAKPLMKVGQSSPSPNKRRLSIDHHHNLAATTRKGRYRGVLLSTPTKKSSTNGSTPISTPSSNDSYNNTVFSETRKTFLQSSPPIMTSSPAFQKKNDYMFPSQEQFKLSLTITESGKAVIAGSLPFSPSSKSSHLMNNNNKKIMQNEKIHKGSKKNAPKFEKRRILSLLKQMKNEKYCDTDTLPEAPPAKPSRSDIIDTELPTIIETSASPIGSARNNNILLSQPPQSPPSSAQLKPPSTPKSSLQFRMGFTPNVALNSVSLSDTISKSTNAVGASNNNNQNGNSISNIADANTLLTLTNSPGVFLSPRNKMLPKSTTASNEQQQEFVFKFSSGDPLLLTDDADGNWPEMLFNVSNTPRRQKCFNTPPSWINFGSPGLFSPPRSSNVMVNGTTVATASDSGNVHRQLQAQLEAQVQVQSQSNSPTQRQQQQRQFQIPPPHINMNSSPPQINIASPPHQSMSRVSSIYFNKEKTTTGVANMLGNTKSENLQPPANLFTAAHGPSTPRNQEFQLPTLIECTPLIQQTMNGSLGTKYIPGTSISNSATPNLHGFPVGTGKAPSSFDDSLKQNPYSNKQDDARTALKRLIDDQ</sequence>
<accession>Q08471</accession>
<accession>D6W2C9</accession>
<accession>O00026</accession>
<protein>
    <recommendedName>
        <fullName>G1-specific transcription factors activator MSA1</fullName>
    </recommendedName>
    <alternativeName>
        <fullName>MBF and SBF-associated protein 1</fullName>
    </alternativeName>
</protein>
<feature type="chain" id="PRO_0000237651" description="G1-specific transcription factors activator MSA1">
    <location>
        <begin position="1"/>
        <end position="629"/>
    </location>
</feature>
<feature type="region of interest" description="Disordered" evidence="1">
    <location>
        <begin position="1"/>
        <end position="60"/>
    </location>
</feature>
<feature type="region of interest" description="Disordered" evidence="1">
    <location>
        <begin position="83"/>
        <end position="106"/>
    </location>
</feature>
<feature type="region of interest" description="Disordered" evidence="1">
    <location>
        <begin position="217"/>
        <end position="286"/>
    </location>
</feature>
<feature type="region of interest" description="Disordered" evidence="1">
    <location>
        <begin position="455"/>
        <end position="485"/>
    </location>
</feature>
<feature type="region of interest" description="Disordered" evidence="1">
    <location>
        <begin position="586"/>
        <end position="629"/>
    </location>
</feature>
<feature type="compositionally biased region" description="Basic residues" evidence="1">
    <location>
        <begin position="1"/>
        <end position="11"/>
    </location>
</feature>
<feature type="compositionally biased region" description="Polar residues" evidence="1">
    <location>
        <begin position="21"/>
        <end position="37"/>
    </location>
</feature>
<feature type="compositionally biased region" description="Polar residues" evidence="1">
    <location>
        <begin position="245"/>
        <end position="260"/>
    </location>
</feature>
<feature type="compositionally biased region" description="Low complexity" evidence="1">
    <location>
        <begin position="261"/>
        <end position="277"/>
    </location>
</feature>
<feature type="compositionally biased region" description="Low complexity" evidence="1">
    <location>
        <begin position="455"/>
        <end position="475"/>
    </location>
</feature>
<feature type="compositionally biased region" description="Basic and acidic residues" evidence="1">
    <location>
        <begin position="614"/>
        <end position="629"/>
    </location>
</feature>
<feature type="modified residue" description="Phosphoserine" evidence="5">
    <location>
        <position position="268"/>
    </location>
</feature>
<proteinExistence type="evidence at protein level"/>
<gene>
    <name type="primary">MSA1</name>
    <name type="ordered locus">YOR066W</name>
    <name type="ORF">YOR29-17</name>
</gene>
<reference key="1">
    <citation type="journal article" date="1997" name="Yeast">
        <title>The sequence of a 54.7 kb fragment of yeast chromosome XV reveals the presence of two tRNAs and 24 new open reading frames.</title>
        <authorList>
            <person name="Valens M."/>
            <person name="Bohn C."/>
            <person name="Daignan-Fornier B."/>
            <person name="Dang V.-D."/>
            <person name="Bolotin-Fukuhara M."/>
        </authorList>
    </citation>
    <scope>NUCLEOTIDE SEQUENCE [GENOMIC DNA]</scope>
    <source>
        <strain>ATCC 96604 / S288c / FY1679</strain>
    </source>
</reference>
<reference key="2">
    <citation type="journal article" date="1997" name="Nature">
        <title>The nucleotide sequence of Saccharomyces cerevisiae chromosome XV.</title>
        <authorList>
            <person name="Dujon B."/>
            <person name="Albermann K."/>
            <person name="Aldea M."/>
            <person name="Alexandraki D."/>
            <person name="Ansorge W."/>
            <person name="Arino J."/>
            <person name="Benes V."/>
            <person name="Bohn C."/>
            <person name="Bolotin-Fukuhara M."/>
            <person name="Bordonne R."/>
            <person name="Boyer J."/>
            <person name="Camasses A."/>
            <person name="Casamayor A."/>
            <person name="Casas C."/>
            <person name="Cheret G."/>
            <person name="Cziepluch C."/>
            <person name="Daignan-Fornier B."/>
            <person name="Dang V.-D."/>
            <person name="de Haan M."/>
            <person name="Delius H."/>
            <person name="Durand P."/>
            <person name="Fairhead C."/>
            <person name="Feldmann H."/>
            <person name="Gaillon L."/>
            <person name="Galisson F."/>
            <person name="Gamo F.-J."/>
            <person name="Gancedo C."/>
            <person name="Goffeau A."/>
            <person name="Goulding S.E."/>
            <person name="Grivell L.A."/>
            <person name="Habbig B."/>
            <person name="Hand N.J."/>
            <person name="Hani J."/>
            <person name="Hattenhorst U."/>
            <person name="Hebling U."/>
            <person name="Hernando Y."/>
            <person name="Herrero E."/>
            <person name="Heumann K."/>
            <person name="Hiesel R."/>
            <person name="Hilger F."/>
            <person name="Hofmann B."/>
            <person name="Hollenberg C.P."/>
            <person name="Hughes B."/>
            <person name="Jauniaux J.-C."/>
            <person name="Kalogeropoulos A."/>
            <person name="Katsoulou C."/>
            <person name="Kordes E."/>
            <person name="Lafuente M.J."/>
            <person name="Landt O."/>
            <person name="Louis E.J."/>
            <person name="Maarse A.C."/>
            <person name="Madania A."/>
            <person name="Mannhaupt G."/>
            <person name="Marck C."/>
            <person name="Martin R.P."/>
            <person name="Mewes H.-W."/>
            <person name="Michaux G."/>
            <person name="Paces V."/>
            <person name="Parle-McDermott A.G."/>
            <person name="Pearson B.M."/>
            <person name="Perrin A."/>
            <person name="Pettersson B."/>
            <person name="Poch O."/>
            <person name="Pohl T.M."/>
            <person name="Poirey R."/>
            <person name="Portetelle D."/>
            <person name="Pujol A."/>
            <person name="Purnelle B."/>
            <person name="Ramezani Rad M."/>
            <person name="Rechmann S."/>
            <person name="Schwager C."/>
            <person name="Schweizer M."/>
            <person name="Sor F."/>
            <person name="Sterky F."/>
            <person name="Tarassov I.A."/>
            <person name="Teodoru C."/>
            <person name="Tettelin H."/>
            <person name="Thierry A."/>
            <person name="Tobiasch E."/>
            <person name="Tzermia M."/>
            <person name="Uhlen M."/>
            <person name="Unseld M."/>
            <person name="Valens M."/>
            <person name="Vandenbol M."/>
            <person name="Vetter I."/>
            <person name="Vlcek C."/>
            <person name="Voet M."/>
            <person name="Volckaert G."/>
            <person name="Voss H."/>
            <person name="Wambutt R."/>
            <person name="Wedler H."/>
            <person name="Wiemann S."/>
            <person name="Winsor B."/>
            <person name="Wolfe K.H."/>
            <person name="Zollner A."/>
            <person name="Zumstein E."/>
            <person name="Kleine K."/>
        </authorList>
    </citation>
    <scope>NUCLEOTIDE SEQUENCE [LARGE SCALE GENOMIC DNA]</scope>
    <source>
        <strain>ATCC 204508 / S288c</strain>
    </source>
</reference>
<reference key="3">
    <citation type="journal article" date="2014" name="G3 (Bethesda)">
        <title>The reference genome sequence of Saccharomyces cerevisiae: Then and now.</title>
        <authorList>
            <person name="Engel S.R."/>
            <person name="Dietrich F.S."/>
            <person name="Fisk D.G."/>
            <person name="Binkley G."/>
            <person name="Balakrishnan R."/>
            <person name="Costanzo M.C."/>
            <person name="Dwight S.S."/>
            <person name="Hitz B.C."/>
            <person name="Karra K."/>
            <person name="Nash R.S."/>
            <person name="Weng S."/>
            <person name="Wong E.D."/>
            <person name="Lloyd P."/>
            <person name="Skrzypek M.S."/>
            <person name="Miyasato S.R."/>
            <person name="Simison M."/>
            <person name="Cherry J.M."/>
        </authorList>
    </citation>
    <scope>GENOME REANNOTATION</scope>
    <source>
        <strain>ATCC 204508 / S288c</strain>
    </source>
</reference>
<reference key="4">
    <citation type="journal article" date="2007" name="Genome Res.">
        <title>Approaching a complete repository of sequence-verified protein-encoding clones for Saccharomyces cerevisiae.</title>
        <authorList>
            <person name="Hu Y."/>
            <person name="Rolfs A."/>
            <person name="Bhullar B."/>
            <person name="Murthy T.V.S."/>
            <person name="Zhu C."/>
            <person name="Berger M.F."/>
            <person name="Camargo A.A."/>
            <person name="Kelley F."/>
            <person name="McCarron S."/>
            <person name="Jepson D."/>
            <person name="Richardson A."/>
            <person name="Raphael J."/>
            <person name="Moreira D."/>
            <person name="Taycher E."/>
            <person name="Zuo D."/>
            <person name="Mohr S."/>
            <person name="Kane M.F."/>
            <person name="Williamson J."/>
            <person name="Simpson A.J.G."/>
            <person name="Bulyk M.L."/>
            <person name="Harlow E."/>
            <person name="Marsischky G."/>
            <person name="Kolodner R.D."/>
            <person name="LaBaer J."/>
        </authorList>
    </citation>
    <scope>NUCLEOTIDE SEQUENCE [GENOMIC DNA]</scope>
    <source>
        <strain>ATCC 204508 / S288c</strain>
    </source>
</reference>
<reference key="5">
    <citation type="journal article" date="2003" name="Nature">
        <title>Targets of the cyclin-dependent kinase Cdk1.</title>
        <authorList>
            <person name="Ubersax J.A."/>
            <person name="Woodbury E.L."/>
            <person name="Quang P.N."/>
            <person name="Paraz M."/>
            <person name="Blethrow J.D."/>
            <person name="Shah K."/>
            <person name="Shokat K.M."/>
            <person name="Morgan D.O."/>
        </authorList>
    </citation>
    <scope>PHOSPHORYLATION BY CDC28</scope>
</reference>
<reference key="6">
    <citation type="journal article" date="2006" name="Nucleic Acids Res.">
        <title>Transcriptional activators in yeast.</title>
        <authorList>
            <person name="Titz B."/>
            <person name="Thomas S."/>
            <person name="Rajagopala S.V."/>
            <person name="Chiba T."/>
            <person name="Ito T."/>
            <person name="Uetz P."/>
        </authorList>
    </citation>
    <scope>FUNCTION</scope>
</reference>
<reference key="7">
    <citation type="journal article" date="2008" name="J. Biol. Chem.">
        <title>The SBF- and MBF-associated protein Msa1 is required for proper timing of G1-specific transcription in Saccharomyces cerevisiae.</title>
        <authorList>
            <person name="Ashe M."/>
            <person name="de Bruin R.A.M."/>
            <person name="Kalashnikova T."/>
            <person name="McDonald W.H."/>
            <person name="Yates J.R. III"/>
            <person name="Wittenberg C."/>
        </authorList>
    </citation>
    <scope>IDENTIFICATION BY MASS SPECTROMETRY</scope>
    <scope>FUNCTION</scope>
    <scope>INTERACTION WITH MBP1; SWI6; SBF AND MBF COMPLEXES</scope>
    <scope>DEVELOPMENTAL STAGE</scope>
</reference>
<reference key="8">
    <citation type="journal article" date="2008" name="Mol. Cell. Proteomics">
        <title>A multidimensional chromatography technology for in-depth phosphoproteome analysis.</title>
        <authorList>
            <person name="Albuquerque C.P."/>
            <person name="Smolka M.B."/>
            <person name="Payne S.H."/>
            <person name="Bafna V."/>
            <person name="Eng J."/>
            <person name="Zhou H."/>
        </authorList>
    </citation>
    <scope>IDENTIFICATION BY MASS SPECTROMETRY [LARGE SCALE ANALYSIS]</scope>
</reference>
<reference key="9">
    <citation type="journal article" date="2009" name="Science">
        <title>Global analysis of Cdk1 substrate phosphorylation sites provides insights into evolution.</title>
        <authorList>
            <person name="Holt L.J."/>
            <person name="Tuch B.B."/>
            <person name="Villen J."/>
            <person name="Johnson A.D."/>
            <person name="Gygi S.P."/>
            <person name="Morgan D.O."/>
        </authorList>
    </citation>
    <scope>PHOSPHORYLATION [LARGE SCALE ANALYSIS] AT SER-268</scope>
    <scope>IDENTIFICATION BY MASS SPECTROMETRY [LARGE SCALE ANALYSIS]</scope>
</reference>
<organism>
    <name type="scientific">Saccharomyces cerevisiae (strain ATCC 204508 / S288c)</name>
    <name type="common">Baker's yeast</name>
    <dbReference type="NCBI Taxonomy" id="559292"/>
    <lineage>
        <taxon>Eukaryota</taxon>
        <taxon>Fungi</taxon>
        <taxon>Dikarya</taxon>
        <taxon>Ascomycota</taxon>
        <taxon>Saccharomycotina</taxon>
        <taxon>Saccharomycetes</taxon>
        <taxon>Saccharomycetales</taxon>
        <taxon>Saccharomycetaceae</taxon>
        <taxon>Saccharomyces</taxon>
    </lineage>
</organism>